<gene>
    <name evidence="1 4" type="primary">nqrE</name>
    <name type="ordered locus">VC0395_A1880</name>
    <name type="ordered locus">VC395_2407</name>
</gene>
<evidence type="ECO:0000255" key="1">
    <source>
        <dbReference type="HAMAP-Rule" id="MF_00429"/>
    </source>
</evidence>
<evidence type="ECO:0000269" key="2">
    <source>
    </source>
</evidence>
<evidence type="ECO:0000269" key="3">
    <source>
    </source>
</evidence>
<evidence type="ECO:0000303" key="4">
    <source>
    </source>
</evidence>
<evidence type="ECO:0000305" key="5"/>
<evidence type="ECO:0007829" key="6">
    <source>
        <dbReference type="PDB" id="8A1W"/>
    </source>
</evidence>
<reference key="1">
    <citation type="submission" date="2007-03" db="EMBL/GenBank/DDBJ databases">
        <authorList>
            <person name="Heidelberg J."/>
        </authorList>
    </citation>
    <scope>NUCLEOTIDE SEQUENCE [LARGE SCALE GENOMIC DNA]</scope>
    <source>
        <strain>ATCC 39541 / Classical Ogawa 395 / O395</strain>
    </source>
</reference>
<reference key="2">
    <citation type="journal article" date="2008" name="PLoS ONE">
        <title>A recalibrated molecular clock and independent origins for the cholera pandemic clones.</title>
        <authorList>
            <person name="Feng L."/>
            <person name="Reeves P.R."/>
            <person name="Lan R."/>
            <person name="Ren Y."/>
            <person name="Gao C."/>
            <person name="Zhou Z."/>
            <person name="Ren Y."/>
            <person name="Cheng J."/>
            <person name="Wang W."/>
            <person name="Wang J."/>
            <person name="Qian W."/>
            <person name="Li D."/>
            <person name="Wang L."/>
        </authorList>
    </citation>
    <scope>NUCLEOTIDE SEQUENCE [LARGE SCALE GENOMIC DNA]</scope>
    <source>
        <strain>ATCC 39541 / Classical Ogawa 395 / O395</strain>
    </source>
</reference>
<reference key="3">
    <citation type="journal article" date="2002" name="Biochemistry">
        <title>Purification and characterization of the recombinant Na(+)-translocating NADH:quinone oxidoreductase from Vibrio cholerae.</title>
        <authorList>
            <person name="Barquera B."/>
            <person name="Hellwig P."/>
            <person name="Zhou W."/>
            <person name="Morgan J.E."/>
            <person name="Haese C.C."/>
            <person name="Gosink K.K."/>
            <person name="Nilges M."/>
            <person name="Bruesehoff P.J."/>
            <person name="Roth A."/>
            <person name="Lancaster C.R."/>
            <person name="Gennis R.B."/>
        </authorList>
    </citation>
    <scope>CATALYTIC ACTIVITY</scope>
    <scope>SUBUNIT</scope>
    <source>
        <strain>ATCC 39541 / Classical Ogawa 395 / O395</strain>
    </source>
</reference>
<reference key="4">
    <citation type="journal article" date="2010" name="J. Biol. Chem.">
        <title>Localization and function of the membrane-bound riboflavin in the Na+-translocating NADH:quinone oxidoreductase (Na+-NQR) from Vibrio cholerae.</title>
        <authorList>
            <person name="Casutt M.S."/>
            <person name="Huber T."/>
            <person name="Brunisholz R."/>
            <person name="Tao M."/>
            <person name="Fritz G."/>
            <person name="Steuber J."/>
        </authorList>
    </citation>
    <scope>SUBUNIT</scope>
    <source>
        <strain>ATCC 39541 / Classical Ogawa 395 / O395</strain>
    </source>
</reference>
<proteinExistence type="evidence at protein level"/>
<accession>A5F5Y5</accession>
<accession>C3M415</accession>
<dbReference type="EC" id="7.2.1.1" evidence="1 2"/>
<dbReference type="EMBL" id="CP000627">
    <property type="protein sequence ID" value="ABQ20943.1"/>
    <property type="molecule type" value="Genomic_DNA"/>
</dbReference>
<dbReference type="EMBL" id="CP001235">
    <property type="protein sequence ID" value="ACP10397.1"/>
    <property type="molecule type" value="Genomic_DNA"/>
</dbReference>
<dbReference type="RefSeq" id="WP_000401432.1">
    <property type="nucleotide sequence ID" value="NZ_JAACZH010000008.1"/>
</dbReference>
<dbReference type="PDB" id="7XK3">
    <property type="method" value="EM"/>
    <property type="resolution" value="3.10 A"/>
    <property type="chains" value="E=1-198"/>
</dbReference>
<dbReference type="PDB" id="7XK4">
    <property type="method" value="EM"/>
    <property type="resolution" value="3.10 A"/>
    <property type="chains" value="E=1-198"/>
</dbReference>
<dbReference type="PDB" id="7XK5">
    <property type="method" value="EM"/>
    <property type="resolution" value="3.10 A"/>
    <property type="chains" value="E=1-198"/>
</dbReference>
<dbReference type="PDB" id="7XK6">
    <property type="method" value="EM"/>
    <property type="resolution" value="3.00 A"/>
    <property type="chains" value="E=1-198"/>
</dbReference>
<dbReference type="PDB" id="7XK7">
    <property type="method" value="EM"/>
    <property type="resolution" value="2.90 A"/>
    <property type="chains" value="E=1-198"/>
</dbReference>
<dbReference type="PDB" id="8A1T">
    <property type="method" value="EM"/>
    <property type="resolution" value="3.37 A"/>
    <property type="chains" value="E=1-198"/>
</dbReference>
<dbReference type="PDB" id="8A1V">
    <property type="method" value="EM"/>
    <property type="resolution" value="2.73 A"/>
    <property type="chains" value="E=1-198"/>
</dbReference>
<dbReference type="PDB" id="8A1W">
    <property type="method" value="EM"/>
    <property type="resolution" value="2.56 A"/>
    <property type="chains" value="E=1-198"/>
</dbReference>
<dbReference type="PDB" id="8A1X">
    <property type="method" value="EM"/>
    <property type="resolution" value="3.20 A"/>
    <property type="chains" value="E=1-198"/>
</dbReference>
<dbReference type="PDB" id="8A1Y">
    <property type="method" value="EM"/>
    <property type="resolution" value="3.30 A"/>
    <property type="chains" value="E=1-198"/>
</dbReference>
<dbReference type="PDB" id="8ACW">
    <property type="method" value="X-ray"/>
    <property type="resolution" value="3.40 A"/>
    <property type="chains" value="E=1-198"/>
</dbReference>
<dbReference type="PDB" id="8AD0">
    <property type="method" value="X-ray"/>
    <property type="resolution" value="3.11 A"/>
    <property type="chains" value="E=1-198"/>
</dbReference>
<dbReference type="PDB" id="8EW3">
    <property type="method" value="EM"/>
    <property type="resolution" value="2.65 A"/>
    <property type="chains" value="E=1-198"/>
</dbReference>
<dbReference type="PDBsum" id="7XK3"/>
<dbReference type="PDBsum" id="7XK4"/>
<dbReference type="PDBsum" id="7XK5"/>
<dbReference type="PDBsum" id="7XK6"/>
<dbReference type="PDBsum" id="7XK7"/>
<dbReference type="PDBsum" id="8A1T"/>
<dbReference type="PDBsum" id="8A1V"/>
<dbReference type="PDBsum" id="8A1W"/>
<dbReference type="PDBsum" id="8A1X"/>
<dbReference type="PDBsum" id="8A1Y"/>
<dbReference type="PDBsum" id="8ACW"/>
<dbReference type="PDBsum" id="8AD0"/>
<dbReference type="PDBsum" id="8EW3"/>
<dbReference type="EMDB" id="EMD-33242"/>
<dbReference type="EMDB" id="EMD-33243"/>
<dbReference type="EMDB" id="EMD-33244"/>
<dbReference type="EMDB" id="EMD-33245"/>
<dbReference type="EMDB" id="EMD-33246"/>
<dbReference type="SMR" id="A5F5Y5"/>
<dbReference type="GeneID" id="88783116"/>
<dbReference type="KEGG" id="vco:VC0395_A1880"/>
<dbReference type="KEGG" id="vcr:VC395_2407"/>
<dbReference type="PATRIC" id="fig|345073.21.peg.2320"/>
<dbReference type="eggNOG" id="COG2209">
    <property type="taxonomic scope" value="Bacteria"/>
</dbReference>
<dbReference type="HOGENOM" id="CLU_095255_0_0_6"/>
<dbReference type="OrthoDB" id="9803631at2"/>
<dbReference type="Proteomes" id="UP000000249">
    <property type="component" value="Chromosome 2"/>
</dbReference>
<dbReference type="GO" id="GO:0009276">
    <property type="term" value="C:Gram-negative-bacterium-type cell wall"/>
    <property type="evidence" value="ECO:0007669"/>
    <property type="project" value="InterPro"/>
</dbReference>
<dbReference type="GO" id="GO:0005886">
    <property type="term" value="C:plasma membrane"/>
    <property type="evidence" value="ECO:0007669"/>
    <property type="project" value="UniProtKB-SubCell"/>
</dbReference>
<dbReference type="GO" id="GO:0016655">
    <property type="term" value="F:oxidoreductase activity, acting on NAD(P)H, quinone or similar compound as acceptor"/>
    <property type="evidence" value="ECO:0000314"/>
    <property type="project" value="UniProtKB"/>
</dbReference>
<dbReference type="GO" id="GO:0022904">
    <property type="term" value="P:respiratory electron transport chain"/>
    <property type="evidence" value="ECO:0007669"/>
    <property type="project" value="InterPro"/>
</dbReference>
<dbReference type="GO" id="GO:0006814">
    <property type="term" value="P:sodium ion transport"/>
    <property type="evidence" value="ECO:0000314"/>
    <property type="project" value="UniProtKB"/>
</dbReference>
<dbReference type="HAMAP" id="MF_00429">
    <property type="entry name" value="NqrE"/>
    <property type="match status" value="1"/>
</dbReference>
<dbReference type="InterPro" id="IPR003667">
    <property type="entry name" value="NqrDE/RnfAE"/>
</dbReference>
<dbReference type="InterPro" id="IPR050133">
    <property type="entry name" value="NqrDE/RnfAE_oxidrdctase"/>
</dbReference>
<dbReference type="InterPro" id="IPR010967">
    <property type="entry name" value="NqrE"/>
</dbReference>
<dbReference type="NCBIfam" id="TIGR01940">
    <property type="entry name" value="nqrE"/>
    <property type="match status" value="1"/>
</dbReference>
<dbReference type="PANTHER" id="PTHR30335">
    <property type="entry name" value="INTEGRAL MEMBRANE PROTEIN OF SOXR-REDUCING COMPLEX"/>
    <property type="match status" value="1"/>
</dbReference>
<dbReference type="PANTHER" id="PTHR30335:SF1">
    <property type="entry name" value="NA(+)-TRANSLOCATING NADH-QUINONE REDUCTASE SUBUNIT E"/>
    <property type="match status" value="1"/>
</dbReference>
<dbReference type="Pfam" id="PF02508">
    <property type="entry name" value="Rnf-Nqr"/>
    <property type="match status" value="1"/>
</dbReference>
<dbReference type="PIRSF" id="PIRSF006102">
    <property type="entry name" value="NQR_DE"/>
    <property type="match status" value="1"/>
</dbReference>
<protein>
    <recommendedName>
        <fullName evidence="1">Na(+)-translocating NADH-quinone reductase subunit E</fullName>
        <shortName evidence="1">Na(+)-NQR subunit E</shortName>
        <shortName evidence="1">Na(+)-translocating NQR subunit E</shortName>
        <ecNumber evidence="1 2">7.2.1.1</ecNumber>
    </recommendedName>
    <alternativeName>
        <fullName evidence="1">NQR complex subunit E</fullName>
    </alternativeName>
    <alternativeName>
        <fullName evidence="1">NQR-1 subunit E</fullName>
    </alternativeName>
</protein>
<comment type="function">
    <text evidence="1">NQR complex catalyzes the reduction of ubiquinone-1 to ubiquinol by two successive reactions, coupled with the transport of Na(+) ions from the cytoplasm to the periplasm. NqrA to NqrE are probably involved in the second step, the conversion of ubisemiquinone to ubiquinol.</text>
</comment>
<comment type="catalytic activity">
    <reaction evidence="1 2">
        <text>a ubiquinone + n Na(+)(in) + NADH + H(+) = a ubiquinol + n Na(+)(out) + NAD(+)</text>
        <dbReference type="Rhea" id="RHEA:47748"/>
        <dbReference type="Rhea" id="RHEA-COMP:9565"/>
        <dbReference type="Rhea" id="RHEA-COMP:9566"/>
        <dbReference type="ChEBI" id="CHEBI:15378"/>
        <dbReference type="ChEBI" id="CHEBI:16389"/>
        <dbReference type="ChEBI" id="CHEBI:17976"/>
        <dbReference type="ChEBI" id="CHEBI:29101"/>
        <dbReference type="ChEBI" id="CHEBI:57540"/>
        <dbReference type="ChEBI" id="CHEBI:57945"/>
        <dbReference type="EC" id="7.2.1.1"/>
    </reaction>
</comment>
<comment type="subunit">
    <text evidence="1 2 3">Composed of six subunits; NqrA, NqrB, NqrC, NqrD, NqrE and NqrF.</text>
</comment>
<comment type="subcellular location">
    <subcellularLocation>
        <location evidence="1 5">Cell inner membrane</location>
        <topology evidence="1">Multi-pass membrane protein</topology>
    </subcellularLocation>
</comment>
<comment type="similarity">
    <text evidence="1 5">Belongs to the NqrDE/RnfAE family.</text>
</comment>
<name>NQRE_VIBC3</name>
<organism>
    <name type="scientific">Vibrio cholerae serotype O1 (strain ATCC 39541 / Classical Ogawa 395 / O395)</name>
    <dbReference type="NCBI Taxonomy" id="345073"/>
    <lineage>
        <taxon>Bacteria</taxon>
        <taxon>Pseudomonadati</taxon>
        <taxon>Pseudomonadota</taxon>
        <taxon>Gammaproteobacteria</taxon>
        <taxon>Vibrionales</taxon>
        <taxon>Vibrionaceae</taxon>
        <taxon>Vibrio</taxon>
    </lineage>
</organism>
<sequence>MEHYISLLVKSIFIENMALSFFLGMCTFLAVSKKVKTSFGLGIAVIVVLTISVPVNNLVYNLVLKPDALVEGVDLSFLNFITFIGVIAALVQILEMILDRFFPPLYNALGIFLPLITVNCAIFGGVSFMVQRDYSFAESVVYGFGSGVGWMLAIVALAGIREKMKYSDVPPGLRGLGITFITAGLMALGFMSFSGVQL</sequence>
<feature type="chain" id="PRO_1000072311" description="Na(+)-translocating NADH-quinone reductase subunit E">
    <location>
        <begin position="1"/>
        <end position="198"/>
    </location>
</feature>
<feature type="transmembrane region" description="Helical" evidence="1">
    <location>
        <begin position="11"/>
        <end position="31"/>
    </location>
</feature>
<feature type="transmembrane region" description="Helical" evidence="1">
    <location>
        <begin position="39"/>
        <end position="59"/>
    </location>
</feature>
<feature type="transmembrane region" description="Helical" evidence="1">
    <location>
        <begin position="77"/>
        <end position="97"/>
    </location>
</feature>
<feature type="transmembrane region" description="Helical" evidence="1">
    <location>
        <begin position="110"/>
        <end position="130"/>
    </location>
</feature>
<feature type="transmembrane region" description="Helical" evidence="1">
    <location>
        <begin position="140"/>
        <end position="160"/>
    </location>
</feature>
<feature type="transmembrane region" description="Helical" evidence="1">
    <location>
        <begin position="176"/>
        <end position="196"/>
    </location>
</feature>
<feature type="helix" evidence="6">
    <location>
        <begin position="3"/>
        <end position="10"/>
    </location>
</feature>
<feature type="turn" evidence="6">
    <location>
        <begin position="11"/>
        <end position="14"/>
    </location>
</feature>
<feature type="turn" evidence="6">
    <location>
        <begin position="17"/>
        <end position="20"/>
    </location>
</feature>
<feature type="helix" evidence="6">
    <location>
        <begin position="25"/>
        <end position="28"/>
    </location>
</feature>
<feature type="helix" evidence="6">
    <location>
        <begin position="31"/>
        <end position="33"/>
    </location>
</feature>
<feature type="helix" evidence="6">
    <location>
        <begin position="35"/>
        <end position="62"/>
    </location>
</feature>
<feature type="strand" evidence="6">
    <location>
        <begin position="68"/>
        <end position="70"/>
    </location>
</feature>
<feature type="strand" evidence="6">
    <location>
        <begin position="77"/>
        <end position="79"/>
    </location>
</feature>
<feature type="helix" evidence="6">
    <location>
        <begin position="80"/>
        <end position="101"/>
    </location>
</feature>
<feature type="helix" evidence="6">
    <location>
        <begin position="103"/>
        <end position="108"/>
    </location>
</feature>
<feature type="turn" evidence="6">
    <location>
        <begin position="109"/>
        <end position="112"/>
    </location>
</feature>
<feature type="helix" evidence="6">
    <location>
        <begin position="113"/>
        <end position="116"/>
    </location>
</feature>
<feature type="helix" evidence="6">
    <location>
        <begin position="120"/>
        <end position="131"/>
    </location>
</feature>
<feature type="helix" evidence="6">
    <location>
        <begin position="136"/>
        <end position="163"/>
    </location>
</feature>
<feature type="helix" evidence="6">
    <location>
        <begin position="164"/>
        <end position="166"/>
    </location>
</feature>
<feature type="turn" evidence="6">
    <location>
        <begin position="171"/>
        <end position="175"/>
    </location>
</feature>
<feature type="helix" evidence="6">
    <location>
        <begin position="176"/>
        <end position="190"/>
    </location>
</feature>
<feature type="helix" evidence="6">
    <location>
        <begin position="191"/>
        <end position="193"/>
    </location>
</feature>
<keyword id="KW-0002">3D-structure</keyword>
<keyword id="KW-0997">Cell inner membrane</keyword>
<keyword id="KW-1003">Cell membrane</keyword>
<keyword id="KW-0406">Ion transport</keyword>
<keyword id="KW-0472">Membrane</keyword>
<keyword id="KW-0520">NAD</keyword>
<keyword id="KW-0915">Sodium</keyword>
<keyword id="KW-0739">Sodium transport</keyword>
<keyword id="KW-1278">Translocase</keyword>
<keyword id="KW-0812">Transmembrane</keyword>
<keyword id="KW-1133">Transmembrane helix</keyword>
<keyword id="KW-0813">Transport</keyword>
<keyword id="KW-0830">Ubiquinone</keyword>